<feature type="signal peptide" evidence="4">
    <location>
        <begin position="1"/>
        <end position="29"/>
    </location>
</feature>
<feature type="chain" id="PRO_0000007496" description="Matrilin-1">
    <location>
        <begin position="30"/>
        <end position="500"/>
    </location>
</feature>
<feature type="domain" description="VWFA 1" evidence="5">
    <location>
        <begin position="30"/>
        <end position="226"/>
    </location>
</feature>
<feature type="domain" description="EGF-like">
    <location>
        <begin position="227"/>
        <end position="267"/>
    </location>
</feature>
<feature type="domain" description="VWFA 2" evidence="5">
    <location>
        <begin position="268"/>
        <end position="457"/>
    </location>
</feature>
<feature type="coiled-coil region" evidence="4">
    <location>
        <begin position="471"/>
        <end position="499"/>
    </location>
</feature>
<feature type="glycosylation site" description="N-linked (GlcNAc...) asparagine" evidence="4">
    <location>
        <position position="80"/>
    </location>
</feature>
<feature type="glycosylation site" description="N-linked (GlcNAc...) asparagine" evidence="4">
    <location>
        <position position="348"/>
    </location>
</feature>
<feature type="disulfide bond" evidence="12">
    <location>
        <begin position="231"/>
        <end position="242"/>
    </location>
</feature>
<feature type="disulfide bond" evidence="12">
    <location>
        <begin position="238"/>
        <end position="251"/>
    </location>
</feature>
<feature type="disulfide bond" evidence="12">
    <location>
        <begin position="253"/>
        <end position="266"/>
    </location>
</feature>
<feature type="sequence conflict" description="In Ref. 1; AAB06521." evidence="12" ref="1">
    <original>F</original>
    <variation>S</variation>
    <location>
        <position position="9"/>
    </location>
</feature>
<feature type="sequence conflict" description="In Ref. 1; AAB06521." evidence="12" ref="1">
    <original>V</original>
    <variation>L</variation>
    <location>
        <position position="184"/>
    </location>
</feature>
<feature type="sequence conflict" description="In Ref. 1; AAB06521." evidence="12" ref="1">
    <original>T</original>
    <variation>S</variation>
    <location>
        <position position="338"/>
    </location>
</feature>
<feature type="sequence conflict" description="In Ref. 1; AAB06521." evidence="12" ref="1">
    <original>A</original>
    <variation>R</variation>
    <location>
        <position position="345"/>
    </location>
</feature>
<evidence type="ECO:0000250" key="1">
    <source>
        <dbReference type="UniProtKB" id="E1BMV3"/>
    </source>
</evidence>
<evidence type="ECO:0000250" key="2">
    <source>
        <dbReference type="UniProtKB" id="P05099"/>
    </source>
</evidence>
<evidence type="ECO:0000250" key="3">
    <source>
        <dbReference type="UniProtKB" id="P21941"/>
    </source>
</evidence>
<evidence type="ECO:0000255" key="4"/>
<evidence type="ECO:0000255" key="5">
    <source>
        <dbReference type="PROSITE-ProRule" id="PRU00219"/>
    </source>
</evidence>
<evidence type="ECO:0000269" key="6">
    <source>
    </source>
</evidence>
<evidence type="ECO:0000269" key="7">
    <source>
    </source>
</evidence>
<evidence type="ECO:0000269" key="8">
    <source>
    </source>
</evidence>
<evidence type="ECO:0000269" key="9">
    <source>
    </source>
</evidence>
<evidence type="ECO:0000303" key="10">
    <source>
    </source>
</evidence>
<evidence type="ECO:0000303" key="11">
    <source ref="2"/>
</evidence>
<evidence type="ECO:0000305" key="12"/>
<evidence type="ECO:0000312" key="13">
    <source>
        <dbReference type="MGI" id="MGI:106591"/>
    </source>
</evidence>
<protein>
    <recommendedName>
        <fullName evidence="13">Matrilin-1</fullName>
    </recommendedName>
    <alternativeName>
        <fullName evidence="10">Cartilage matrix protein</fullName>
    </alternativeName>
</protein>
<comment type="function">
    <text evidence="2 6 7 8">A major component of the extracellular matrix of non-articular cartilage (By similarity). Binds to type 2 collagens and forms long concatenated protein networks as part of the extracellular matrix (By similarity). Required for the network-like organization and bundling of collagen fibrils surrounding chondrocytes in the zones of maturation and hypertrophy (PubMed:10633862). Required for mechanotransduction and adaption to mechanical loading in cartilage chondrocytes, resulting in an increase in expression of the extracellular matrix components ACAN and COL2A1 (PubMed:27270603). Acts as a moderator of angiogenesis in response to injury (PubMed:24692560).</text>
</comment>
<comment type="subunit">
    <text evidence="1 2 3">Homotrimer (By similarity). Part of a complex composed of MATN1 (via VWFA1 domain), type 2 collagens and type 6 collagens (By similarity). Forms a complex (via covalent bonds) with ACAN; the interaction increases in abundance with increasing age of the organism via an increase in occupancy of MATN1 binding sites (By similarity). Interacts with COMP (By similarity).</text>
</comment>
<comment type="subcellular location">
    <subcellularLocation>
        <location evidence="2">Secreted</location>
        <location evidence="2">Extracellular space</location>
        <location evidence="2">Extracellular matrix</location>
    </subcellularLocation>
</comment>
<comment type="tissue specificity">
    <text evidence="8 9">Expressed in femoral head articular cartilage (PubMed:27270603). Expressed in the trachea and extraskeletal tissue around the eye (PubMed:8665920).</text>
</comment>
<comment type="developmental stage">
    <text evidence="6 9">Initially expressed in a range of chondrocyte precursor tissues at 10.5 dpc (PubMed:8665920). Expressed in the vertebral body at 12.5 dpc prior to hypertrophy and calcification, expression decreases with the progress of hypertrophy at later stages of chrondrogenesis (PubMed:8665920). Abundantly expressed in the limb buds from 13.5 dpc (PubMed:8665920). Expressed in the longitudinal section of the shoulder joint, expression is absent in the forming articular surface at 14.5 dpc (PubMed:8665920). Expressed in the zone of maturation and areas of hypertrophy of growth plates at 15 dpc (PubMed:10633862). Expressed in the trachea and limbs at birth and at one week of age (PubMed:8665920).</text>
</comment>
<comment type="PTM">
    <text evidence="3">N-glycosylated; reduces binding affinity for type 2 collagens.</text>
</comment>
<comment type="disruption phenotype">
    <text evidence="6 7 8">Knockout mice are phenotypically normal with the overall length and shape of skeletons and skeleton components at birth comparable with wild types (PubMed:10633862). Histology of proximal tibial growth plates of 15 dpc embryos and mice at birth show no morphological differences (PubMed:10633862). Collagen fibrils in the collagen matrix surrounding zone of maturation chondrocytes and zone of hypertrophy show an abnormal unidirectional organization and also contain sporadic larger diameter fibrils at both 15 dpc and at birth (PubMed:10633862). No change in deposition of Acan or type X collagen matrix in the proximal tibial growth plates at 15 dpc (PubMed:10633862). Bundling of collagen fibrils is more defined at birth, however tends to be orientated in a single direction and fibrils on average are significantly larger in diameter (PubMed:10633862). Adults show an increase in elasticity of femoral head articular cartilage (PubMed:27270603). Abolishes the mechanical load-dependent induction of Col2a1 and Acan transcription in chondrocytes. Joint cartilage shows irregular and massive degenerative matrix changes with a reduction in proteoglycans in response to mechanical erosion damage (PubMed:27270603). Decrease in overall angiogenesis and expression of angiogenesis markers such as Pecam1, Cdh5 and Vegfr family members at tibia fracture calluses following injury (PubMed:24692560).</text>
</comment>
<keyword id="KW-0175">Coiled coil</keyword>
<keyword id="KW-1015">Disulfide bond</keyword>
<keyword id="KW-0245">EGF-like domain</keyword>
<keyword id="KW-0272">Extracellular matrix</keyword>
<keyword id="KW-0325">Glycoprotein</keyword>
<keyword id="KW-1185">Reference proteome</keyword>
<keyword id="KW-0677">Repeat</keyword>
<keyword id="KW-0964">Secreted</keyword>
<keyword id="KW-0732">Signal</keyword>
<dbReference type="EMBL" id="U35035">
    <property type="protein sequence ID" value="AAB06521.1"/>
    <property type="molecule type" value="mRNA"/>
</dbReference>
<dbReference type="EMBL" id="Y13902">
    <property type="protein sequence ID" value="CAC79633.1"/>
    <property type="molecule type" value="Genomic_DNA"/>
</dbReference>
<dbReference type="EMBL" id="AL669980">
    <property type="status" value="NOT_ANNOTATED_CDS"/>
    <property type="molecule type" value="Genomic_DNA"/>
</dbReference>
<dbReference type="EMBL" id="CU210856">
    <property type="status" value="NOT_ANNOTATED_CDS"/>
    <property type="molecule type" value="Genomic_DNA"/>
</dbReference>
<dbReference type="EMBL" id="BC047140">
    <property type="protein sequence ID" value="AAH47140.1"/>
    <property type="molecule type" value="mRNA"/>
</dbReference>
<dbReference type="CCDS" id="CCDS18713.1"/>
<dbReference type="PIR" id="S66522">
    <property type="entry name" value="S66522"/>
</dbReference>
<dbReference type="RefSeq" id="NP_034899.2">
    <property type="nucleotide sequence ID" value="NM_010769.2"/>
</dbReference>
<dbReference type="SMR" id="P51942"/>
<dbReference type="BioGRID" id="201320">
    <property type="interactions" value="2"/>
</dbReference>
<dbReference type="ComplexPortal" id="CPX-4463">
    <property type="entry name" value="Matrilin-1 complex"/>
</dbReference>
<dbReference type="ComplexPortal" id="CPX-4504">
    <property type="entry name" value="Matrilin-1 - Matrilin-3 complex"/>
</dbReference>
<dbReference type="FunCoup" id="P51942">
    <property type="interactions" value="78"/>
</dbReference>
<dbReference type="IntAct" id="P51942">
    <property type="interactions" value="1"/>
</dbReference>
<dbReference type="MINT" id="P51942"/>
<dbReference type="STRING" id="10090.ENSMUSP00000099636"/>
<dbReference type="GlyCosmos" id="P51942">
    <property type="glycosylation" value="2 sites, No reported glycans"/>
</dbReference>
<dbReference type="GlyGen" id="P51942">
    <property type="glycosylation" value="2 sites, 1 N-linked glycan (1 site)"/>
</dbReference>
<dbReference type="PhosphoSitePlus" id="P51942"/>
<dbReference type="jPOST" id="P51942"/>
<dbReference type="PaxDb" id="10090-ENSMUSP00000099636"/>
<dbReference type="ProteomicsDB" id="287315"/>
<dbReference type="Antibodypedia" id="31055">
    <property type="antibodies" value="219 antibodies from 31 providers"/>
</dbReference>
<dbReference type="DNASU" id="17180"/>
<dbReference type="Ensembl" id="ENSMUST00000102576.4">
    <property type="protein sequence ID" value="ENSMUSP00000099636.4"/>
    <property type="gene ID" value="ENSMUSG00000040533.8"/>
</dbReference>
<dbReference type="GeneID" id="17180"/>
<dbReference type="KEGG" id="mmu:17180"/>
<dbReference type="UCSC" id="uc008uzx.2">
    <property type="organism name" value="mouse"/>
</dbReference>
<dbReference type="AGR" id="MGI:106591"/>
<dbReference type="CTD" id="4146"/>
<dbReference type="MGI" id="MGI:106591">
    <property type="gene designation" value="Matn1"/>
</dbReference>
<dbReference type="VEuPathDB" id="HostDB:ENSMUSG00000040533"/>
<dbReference type="eggNOG" id="KOG1217">
    <property type="taxonomic scope" value="Eukaryota"/>
</dbReference>
<dbReference type="GeneTree" id="ENSGT00940000159638"/>
<dbReference type="HOGENOM" id="CLU_008905_7_0_1"/>
<dbReference type="InParanoid" id="P51942"/>
<dbReference type="OMA" id="FPLRAHS"/>
<dbReference type="OrthoDB" id="6022609at2759"/>
<dbReference type="PhylomeDB" id="P51942"/>
<dbReference type="TreeFam" id="TF330078"/>
<dbReference type="Reactome" id="R-MMU-3000178">
    <property type="pathway name" value="ECM proteoglycans"/>
</dbReference>
<dbReference type="BioGRID-ORCS" id="17180">
    <property type="hits" value="1 hit in 79 CRISPR screens"/>
</dbReference>
<dbReference type="ChiTaRS" id="Matn1">
    <property type="organism name" value="mouse"/>
</dbReference>
<dbReference type="PRO" id="PR:P51942"/>
<dbReference type="Proteomes" id="UP000000589">
    <property type="component" value="Chromosome 4"/>
</dbReference>
<dbReference type="RNAct" id="P51942">
    <property type="molecule type" value="protein"/>
</dbReference>
<dbReference type="Bgee" id="ENSMUSG00000040533">
    <property type="expression patterns" value="Expressed in humerus cartilage element and 85 other cell types or tissues"/>
</dbReference>
<dbReference type="GO" id="GO:0031012">
    <property type="term" value="C:extracellular matrix"/>
    <property type="evidence" value="ECO:0000314"/>
    <property type="project" value="MGI"/>
</dbReference>
<dbReference type="GO" id="GO:0005576">
    <property type="term" value="C:extracellular region"/>
    <property type="evidence" value="ECO:0007669"/>
    <property type="project" value="UniProtKB-KW"/>
</dbReference>
<dbReference type="GO" id="GO:0120216">
    <property type="term" value="C:matrilin complex"/>
    <property type="evidence" value="ECO:0000266"/>
    <property type="project" value="ComplexPortal"/>
</dbReference>
<dbReference type="GO" id="GO:0005509">
    <property type="term" value="F:calcium ion binding"/>
    <property type="evidence" value="ECO:0007669"/>
    <property type="project" value="InterPro"/>
</dbReference>
<dbReference type="GO" id="GO:0002062">
    <property type="term" value="P:chondrocyte differentiation"/>
    <property type="evidence" value="ECO:0000315"/>
    <property type="project" value="MGI"/>
</dbReference>
<dbReference type="GO" id="GO:0030198">
    <property type="term" value="P:extracellular matrix organization"/>
    <property type="evidence" value="ECO:0000303"/>
    <property type="project" value="ComplexPortal"/>
</dbReference>
<dbReference type="GO" id="GO:0003429">
    <property type="term" value="P:growth plate cartilage chondrocyte morphogenesis"/>
    <property type="evidence" value="ECO:0000315"/>
    <property type="project" value="MGI"/>
</dbReference>
<dbReference type="GO" id="GO:0030500">
    <property type="term" value="P:regulation of bone mineralization"/>
    <property type="evidence" value="ECO:0000315"/>
    <property type="project" value="MGI"/>
</dbReference>
<dbReference type="CDD" id="cd01475">
    <property type="entry name" value="vWA_Matrilin"/>
    <property type="match status" value="1"/>
</dbReference>
<dbReference type="FunFam" id="2.10.25.10:FF:000600">
    <property type="entry name" value="cartilage matrix protein-like"/>
    <property type="match status" value="1"/>
</dbReference>
<dbReference type="FunFam" id="3.40.50.410:FF:000004">
    <property type="entry name" value="collagen alpha-6(VI) chain"/>
    <property type="match status" value="1"/>
</dbReference>
<dbReference type="FunFam" id="3.40.50.410:FF:000018">
    <property type="entry name" value="Matrilin 1"/>
    <property type="match status" value="1"/>
</dbReference>
<dbReference type="Gene3D" id="1.20.5.30">
    <property type="match status" value="1"/>
</dbReference>
<dbReference type="Gene3D" id="2.10.25.10">
    <property type="entry name" value="Laminin"/>
    <property type="match status" value="1"/>
</dbReference>
<dbReference type="Gene3D" id="3.40.50.410">
    <property type="entry name" value="von Willebrand factor, type A domain"/>
    <property type="match status" value="2"/>
</dbReference>
<dbReference type="InterPro" id="IPR050525">
    <property type="entry name" value="ECM_Assembly_Org"/>
</dbReference>
<dbReference type="InterPro" id="IPR001881">
    <property type="entry name" value="EGF-like_Ca-bd_dom"/>
</dbReference>
<dbReference type="InterPro" id="IPR000742">
    <property type="entry name" value="EGF-like_dom"/>
</dbReference>
<dbReference type="InterPro" id="IPR036337">
    <property type="entry name" value="Matrilin_cc_sf"/>
</dbReference>
<dbReference type="InterPro" id="IPR019466">
    <property type="entry name" value="Matrilin_coiled-coil_trimer"/>
</dbReference>
<dbReference type="InterPro" id="IPR002035">
    <property type="entry name" value="VWF_A"/>
</dbReference>
<dbReference type="InterPro" id="IPR036465">
    <property type="entry name" value="vWFA_dom_sf"/>
</dbReference>
<dbReference type="PANTHER" id="PTHR24020:SF16">
    <property type="entry name" value="CARTILAGE MATRIX PROTEIN"/>
    <property type="match status" value="1"/>
</dbReference>
<dbReference type="PANTHER" id="PTHR24020">
    <property type="entry name" value="COLLAGEN ALPHA"/>
    <property type="match status" value="1"/>
</dbReference>
<dbReference type="Pfam" id="PF14670">
    <property type="entry name" value="FXa_inhibition"/>
    <property type="match status" value="1"/>
</dbReference>
<dbReference type="Pfam" id="PF10393">
    <property type="entry name" value="Matrilin_ccoil"/>
    <property type="match status" value="1"/>
</dbReference>
<dbReference type="Pfam" id="PF00092">
    <property type="entry name" value="VWA"/>
    <property type="match status" value="2"/>
</dbReference>
<dbReference type="PRINTS" id="PR00453">
    <property type="entry name" value="VWFADOMAIN"/>
</dbReference>
<dbReference type="SMART" id="SM00181">
    <property type="entry name" value="EGF"/>
    <property type="match status" value="1"/>
</dbReference>
<dbReference type="SMART" id="SM00179">
    <property type="entry name" value="EGF_CA"/>
    <property type="match status" value="1"/>
</dbReference>
<dbReference type="SMART" id="SM01279">
    <property type="entry name" value="Matrilin_ccoil"/>
    <property type="match status" value="1"/>
</dbReference>
<dbReference type="SMART" id="SM00327">
    <property type="entry name" value="VWA"/>
    <property type="match status" value="2"/>
</dbReference>
<dbReference type="SUPFAM" id="SSF58002">
    <property type="entry name" value="Chicken cartilage matrix protein"/>
    <property type="match status" value="1"/>
</dbReference>
<dbReference type="SUPFAM" id="SSF53300">
    <property type="entry name" value="vWA-like"/>
    <property type="match status" value="2"/>
</dbReference>
<dbReference type="PROSITE" id="PS01186">
    <property type="entry name" value="EGF_2"/>
    <property type="match status" value="1"/>
</dbReference>
<dbReference type="PROSITE" id="PS50234">
    <property type="entry name" value="VWFA"/>
    <property type="match status" value="2"/>
</dbReference>
<proteinExistence type="evidence at transcript level"/>
<reference key="1">
    <citation type="journal article" date="1996" name="Eur. J. Biochem.">
        <title>Cloning, sequencing and expression analysis of mouse cartilage matrix protein cDNA.</title>
        <authorList>
            <person name="Aszodi A."/>
            <person name="Hauser N."/>
            <person name="Studer D."/>
            <person name="Paulsson M."/>
            <person name="Hiripi L."/>
            <person name="Bosze Z."/>
        </authorList>
    </citation>
    <scope>NUCLEOTIDE SEQUENCE [MRNA]</scope>
    <scope>TISSUE SPECIFICITY</scope>
    <scope>DEVELOPMENTAL STAGE</scope>
    <source>
        <strain>C57BL/6 X CBA</strain>
        <tissue>Cartilage</tissue>
    </source>
</reference>
<reference key="2">
    <citation type="submission" date="1997-06" db="EMBL/GenBank/DDBJ databases">
        <title>Sequence, structure and chromosomal localization of Crtm gene encoding mouse cartilage matrix protein.</title>
        <authorList>
            <person name="Aszodi A."/>
            <person name="Beier D.R."/>
            <person name="Hiripi L."/>
            <person name="Bosze Z."/>
            <person name="Faessler R."/>
        </authorList>
    </citation>
    <scope>NUCLEOTIDE SEQUENCE [GENOMIC DNA]</scope>
</reference>
<reference key="3">
    <citation type="journal article" date="2009" name="PLoS Biol.">
        <title>Lineage-specific biology revealed by a finished genome assembly of the mouse.</title>
        <authorList>
            <person name="Church D.M."/>
            <person name="Goodstadt L."/>
            <person name="Hillier L.W."/>
            <person name="Zody M.C."/>
            <person name="Goldstein S."/>
            <person name="She X."/>
            <person name="Bult C.J."/>
            <person name="Agarwala R."/>
            <person name="Cherry J.L."/>
            <person name="DiCuccio M."/>
            <person name="Hlavina W."/>
            <person name="Kapustin Y."/>
            <person name="Meric P."/>
            <person name="Maglott D."/>
            <person name="Birtle Z."/>
            <person name="Marques A.C."/>
            <person name="Graves T."/>
            <person name="Zhou S."/>
            <person name="Teague B."/>
            <person name="Potamousis K."/>
            <person name="Churas C."/>
            <person name="Place M."/>
            <person name="Herschleb J."/>
            <person name="Runnheim R."/>
            <person name="Forrest D."/>
            <person name="Amos-Landgraf J."/>
            <person name="Schwartz D.C."/>
            <person name="Cheng Z."/>
            <person name="Lindblad-Toh K."/>
            <person name="Eichler E.E."/>
            <person name="Ponting C.P."/>
        </authorList>
    </citation>
    <scope>NUCLEOTIDE SEQUENCE [LARGE SCALE GENOMIC DNA]</scope>
    <source>
        <strain>C57BL/6J</strain>
    </source>
</reference>
<reference key="4">
    <citation type="journal article" date="2004" name="Genome Res.">
        <title>The status, quality, and expansion of the NIH full-length cDNA project: the Mammalian Gene Collection (MGC).</title>
        <authorList>
            <consortium name="The MGC Project Team"/>
        </authorList>
    </citation>
    <scope>NUCLEOTIDE SEQUENCE [LARGE SCALE MRNA]</scope>
    <source>
        <tissue>Olfactory epithelium</tissue>
    </source>
</reference>
<reference key="5">
    <citation type="journal article" date="1999" name="Dev. Dyn.">
        <title>Mice lacking matrilin-1 (cartilage matrix protein) have alterations in type II collagen fibrillogenesis and fibril organization.</title>
        <authorList>
            <person name="Huang X."/>
            <person name="Birk D.E."/>
            <person name="Goetinck P.F."/>
        </authorList>
    </citation>
    <scope>FUNCTION</scope>
    <scope>DEVELOPMENTAL STAGE</scope>
    <scope>DISRUPTION PHENOTYPE</scope>
</reference>
<reference key="6">
    <citation type="journal article" date="2014" name="J. Biol. Chem.">
        <title>Matrilin-1 is an inhibitor of neovascularization.</title>
        <authorList>
            <person name="Foradori M.J."/>
            <person name="Chen Q."/>
            <person name="Fernandez C.A."/>
            <person name="Harper J."/>
            <person name="Li X."/>
            <person name="Tsang P.C."/>
            <person name="Langer R."/>
            <person name="Moses M.A."/>
        </authorList>
    </citation>
    <scope>FUNCTION</scope>
    <scope>DISRUPTION PHENOTYPE</scope>
</reference>
<reference key="7">
    <citation type="journal article" date="2016" name="PLoS ONE">
        <title>Deficient Mechanical Activation of Anabolic Transcripts and Post-Traumatic Cartilage Degeneration in Matrilin-1 Knockout Mice.</title>
        <authorList>
            <person name="Chen Y."/>
            <person name="Cossman J."/>
            <person name="Jayasuriya C.T."/>
            <person name="Li X."/>
            <person name="Guan Y."/>
            <person name="Fonseca V."/>
            <person name="Yang K."/>
            <person name="Charbonneau C."/>
            <person name="Yu H."/>
            <person name="Kanbe K."/>
            <person name="Ma P."/>
            <person name="Darling E."/>
            <person name="Chen Q."/>
        </authorList>
    </citation>
    <scope>FUNCTION</scope>
    <scope>TISSUE SPECIFICITY</scope>
    <scope>DISRUPTION PHENOTYPE</scope>
</reference>
<gene>
    <name evidence="13" type="primary">Matn1</name>
    <name evidence="10" type="synonym">Cmp</name>
    <name evidence="11" type="synonym">Crtm</name>
</gene>
<organism>
    <name type="scientific">Mus musculus</name>
    <name type="common">Mouse</name>
    <dbReference type="NCBI Taxonomy" id="10090"/>
    <lineage>
        <taxon>Eukaryota</taxon>
        <taxon>Metazoa</taxon>
        <taxon>Chordata</taxon>
        <taxon>Craniata</taxon>
        <taxon>Vertebrata</taxon>
        <taxon>Euteleostomi</taxon>
        <taxon>Mammalia</taxon>
        <taxon>Eutheria</taxon>
        <taxon>Euarchontoglires</taxon>
        <taxon>Glires</taxon>
        <taxon>Rodentia</taxon>
        <taxon>Myomorpha</taxon>
        <taxon>Muroidea</taxon>
        <taxon>Muridae</taxon>
        <taxon>Murinae</taxon>
        <taxon>Mus</taxon>
        <taxon>Mus</taxon>
    </lineage>
</organism>
<sequence length="500" mass="54421">MKVTSGPAFALCSLLLLLLLLLQVPDSLSLVPQPRGHLCRTRPTDLVFVVDSSRSVRPVEFEKVKVFLSQVIESLDVGPNATRVGLVNYASTVKPEFPLRAHGSKASLLQAVRRIQPLSTGTMTGLALQFAITKALSDAEGGRARSPDISKVVIVVTDGRPQDSVRDVSERARASGIELFAIGVGRVDKATLRQIASEPQDEHVDYVESYNVIEKLAKKFQEAFCVVSDLCATGDHDCEQLCVSSPGSYTCACHEGFTLNSDGKTCNVCRGGGSGSATDLVFLIDGSKSVRPENFELVKKFINQIVDTLDVSDRLAQVGLVQYSSSIRQEFPLGRFHTKKDIKAAVRNMSYMEKGTMTGAALKYLIDNSFTVSSGARPGAQKVGIVFTDGRSQDYINDAARKAKDLGFKMFAVGVGNAVEEELREIASEPVADHYFYTADFKTINQIGKKLQKQICVEEDPCACESILKFEAKVEGLLQALTRKLEAVSGRLAVLENRII</sequence>
<accession>P51942</accession>
<accession>Q80VN5</accession>
<name>MATN1_MOUSE</name>